<comment type="function">
    <text evidence="1">Together with its co-chaperonin GroES, plays an essential role in assisting protein folding. The GroEL-GroES system forms a nano-cage that allows encapsulation of the non-native substrate proteins and provides a physical environment optimized to promote and accelerate protein folding.</text>
</comment>
<comment type="catalytic activity">
    <reaction evidence="1">
        <text>ATP + H2O + a folded polypeptide = ADP + phosphate + an unfolded polypeptide.</text>
        <dbReference type="EC" id="5.6.1.7"/>
    </reaction>
</comment>
<comment type="subunit">
    <text evidence="1">Forms a cylinder of 14 subunits composed of two heptameric rings stacked back-to-back. Interacts with the co-chaperonin GroES.</text>
</comment>
<comment type="subcellular location">
    <subcellularLocation>
        <location evidence="1">Cytoplasm</location>
    </subcellularLocation>
</comment>
<comment type="similarity">
    <text evidence="1">Belongs to the chaperonin (HSP60) family.</text>
</comment>
<gene>
    <name evidence="1" type="primary">groEL</name>
    <name evidence="1" type="synonym">groL</name>
    <name type="ordered locus">FTH_1651</name>
</gene>
<reference key="1">
    <citation type="journal article" date="2006" name="J. Bacteriol.">
        <title>Chromosome rearrangement and diversification of Francisella tularensis revealed by the type B (OSU18) genome sequence.</title>
        <authorList>
            <person name="Petrosino J.F."/>
            <person name="Xiang Q."/>
            <person name="Karpathy S.E."/>
            <person name="Jiang H."/>
            <person name="Yerrapragada S."/>
            <person name="Liu Y."/>
            <person name="Gioia J."/>
            <person name="Hemphill L."/>
            <person name="Gonzalez A."/>
            <person name="Raghavan T.M."/>
            <person name="Uzman A."/>
            <person name="Fox G.E."/>
            <person name="Highlander S."/>
            <person name="Reichard M."/>
            <person name="Morton R.J."/>
            <person name="Clinkenbeard K.D."/>
            <person name="Weinstock G.M."/>
        </authorList>
    </citation>
    <scope>NUCLEOTIDE SEQUENCE [LARGE SCALE GENOMIC DNA]</scope>
    <source>
        <strain>OSU18</strain>
    </source>
</reference>
<organism>
    <name type="scientific">Francisella tularensis subsp. holarctica (strain OSU18)</name>
    <dbReference type="NCBI Taxonomy" id="393011"/>
    <lineage>
        <taxon>Bacteria</taxon>
        <taxon>Pseudomonadati</taxon>
        <taxon>Pseudomonadota</taxon>
        <taxon>Gammaproteobacteria</taxon>
        <taxon>Thiotrichales</taxon>
        <taxon>Francisellaceae</taxon>
        <taxon>Francisella</taxon>
    </lineage>
</organism>
<proteinExistence type="inferred from homology"/>
<keyword id="KW-0067">ATP-binding</keyword>
<keyword id="KW-0143">Chaperone</keyword>
<keyword id="KW-0963">Cytoplasm</keyword>
<keyword id="KW-0413">Isomerase</keyword>
<keyword id="KW-0547">Nucleotide-binding</keyword>
<sequence length="544" mass="57403">MAAKQVLFSDEARAKMLDGVNTLANAVKVTLGPKGRNVVLDKSFGAPTITKDGVSVAKEIELEDKFENMGAQIVKEVASKTADVAGDGTTTATVLAQALLTEGLKAVTAGMNPMDLKRGIDKATARLVEELKALSKPCSDPKSIEQVGTISANSDATVGKLIADAMAKVGKEGVITVEEGKGFEDELDVVEGMQFDRGYLSPYFATNQENMTTDLENPYILIVDKKISNIRDLLPILEGVSKSGRALLIIAEDVESEALATLVVNNMRGVVKVCAVKAPGFGDRRKAMLEDIATLTGATFVSEDLSMKLEETNMEHLGTASRVQVTKDNTTIIDGAGEKEAIAKRINVIKANIAEANSDYDREKLQERLAKLSGGVAVIKVGAVTEAEMKEKKDRVDDALHATRAAVEEGIVAGGGVALIRAQKALDGLTGENDDQNHGIALLRKAIEAPLRQIVSNAGGESSVVVNQVKANQGNYGYNAANDTYGDMVEMGILDPTKVTRSALQHAASIAGLMITTEAMIGEIKEAAPAMPMGGGMGGMPGMM</sequence>
<dbReference type="EC" id="5.6.1.7" evidence="1"/>
<dbReference type="EMBL" id="CP000437">
    <property type="protein sequence ID" value="ABI83427.1"/>
    <property type="molecule type" value="Genomic_DNA"/>
</dbReference>
<dbReference type="RefSeq" id="WP_003017167.1">
    <property type="nucleotide sequence ID" value="NC_017463.1"/>
</dbReference>
<dbReference type="SMR" id="Q0BKF7"/>
<dbReference type="KEGG" id="fth:FTH_1651"/>
<dbReference type="GO" id="GO:0005737">
    <property type="term" value="C:cytoplasm"/>
    <property type="evidence" value="ECO:0007669"/>
    <property type="project" value="UniProtKB-SubCell"/>
</dbReference>
<dbReference type="GO" id="GO:0005524">
    <property type="term" value="F:ATP binding"/>
    <property type="evidence" value="ECO:0007669"/>
    <property type="project" value="UniProtKB-UniRule"/>
</dbReference>
<dbReference type="GO" id="GO:0140662">
    <property type="term" value="F:ATP-dependent protein folding chaperone"/>
    <property type="evidence" value="ECO:0007669"/>
    <property type="project" value="InterPro"/>
</dbReference>
<dbReference type="GO" id="GO:0016853">
    <property type="term" value="F:isomerase activity"/>
    <property type="evidence" value="ECO:0007669"/>
    <property type="project" value="UniProtKB-KW"/>
</dbReference>
<dbReference type="GO" id="GO:0051082">
    <property type="term" value="F:unfolded protein binding"/>
    <property type="evidence" value="ECO:0007669"/>
    <property type="project" value="UniProtKB-UniRule"/>
</dbReference>
<dbReference type="GO" id="GO:0042026">
    <property type="term" value="P:protein refolding"/>
    <property type="evidence" value="ECO:0007669"/>
    <property type="project" value="UniProtKB-UniRule"/>
</dbReference>
<dbReference type="CDD" id="cd03344">
    <property type="entry name" value="GroEL"/>
    <property type="match status" value="1"/>
</dbReference>
<dbReference type="FunFam" id="1.10.560.10:FF:000001">
    <property type="entry name" value="60 kDa chaperonin"/>
    <property type="match status" value="1"/>
</dbReference>
<dbReference type="FunFam" id="3.50.7.10:FF:000001">
    <property type="entry name" value="60 kDa chaperonin"/>
    <property type="match status" value="1"/>
</dbReference>
<dbReference type="Gene3D" id="3.50.7.10">
    <property type="entry name" value="GroEL"/>
    <property type="match status" value="1"/>
</dbReference>
<dbReference type="Gene3D" id="1.10.560.10">
    <property type="entry name" value="GroEL-like equatorial domain"/>
    <property type="match status" value="1"/>
</dbReference>
<dbReference type="Gene3D" id="3.30.260.10">
    <property type="entry name" value="TCP-1-like chaperonin intermediate domain"/>
    <property type="match status" value="1"/>
</dbReference>
<dbReference type="HAMAP" id="MF_00600">
    <property type="entry name" value="CH60"/>
    <property type="match status" value="1"/>
</dbReference>
<dbReference type="InterPro" id="IPR018370">
    <property type="entry name" value="Chaperonin_Cpn60_CS"/>
</dbReference>
<dbReference type="InterPro" id="IPR001844">
    <property type="entry name" value="Cpn60/GroEL"/>
</dbReference>
<dbReference type="InterPro" id="IPR002423">
    <property type="entry name" value="Cpn60/GroEL/TCP-1"/>
</dbReference>
<dbReference type="InterPro" id="IPR027409">
    <property type="entry name" value="GroEL-like_apical_dom_sf"/>
</dbReference>
<dbReference type="InterPro" id="IPR027413">
    <property type="entry name" value="GROEL-like_equatorial_sf"/>
</dbReference>
<dbReference type="InterPro" id="IPR027410">
    <property type="entry name" value="TCP-1-like_intermed_sf"/>
</dbReference>
<dbReference type="NCBIfam" id="TIGR02348">
    <property type="entry name" value="GroEL"/>
    <property type="match status" value="1"/>
</dbReference>
<dbReference type="NCBIfam" id="NF000592">
    <property type="entry name" value="PRK00013.1"/>
    <property type="match status" value="1"/>
</dbReference>
<dbReference type="NCBIfam" id="NF009487">
    <property type="entry name" value="PRK12849.1"/>
    <property type="match status" value="1"/>
</dbReference>
<dbReference type="NCBIfam" id="NF009488">
    <property type="entry name" value="PRK12850.1"/>
    <property type="match status" value="1"/>
</dbReference>
<dbReference type="NCBIfam" id="NF009489">
    <property type="entry name" value="PRK12851.1"/>
    <property type="match status" value="1"/>
</dbReference>
<dbReference type="PANTHER" id="PTHR45633">
    <property type="entry name" value="60 KDA HEAT SHOCK PROTEIN, MITOCHONDRIAL"/>
    <property type="match status" value="1"/>
</dbReference>
<dbReference type="Pfam" id="PF00118">
    <property type="entry name" value="Cpn60_TCP1"/>
    <property type="match status" value="1"/>
</dbReference>
<dbReference type="PRINTS" id="PR00298">
    <property type="entry name" value="CHAPERONIN60"/>
</dbReference>
<dbReference type="SUPFAM" id="SSF52029">
    <property type="entry name" value="GroEL apical domain-like"/>
    <property type="match status" value="1"/>
</dbReference>
<dbReference type="SUPFAM" id="SSF48592">
    <property type="entry name" value="GroEL equatorial domain-like"/>
    <property type="match status" value="1"/>
</dbReference>
<dbReference type="SUPFAM" id="SSF54849">
    <property type="entry name" value="GroEL-intermediate domain like"/>
    <property type="match status" value="1"/>
</dbReference>
<dbReference type="PROSITE" id="PS00296">
    <property type="entry name" value="CHAPERONINS_CPN60"/>
    <property type="match status" value="1"/>
</dbReference>
<feature type="chain" id="PRO_1000025783" description="Chaperonin GroEL">
    <location>
        <begin position="1"/>
        <end position="544"/>
    </location>
</feature>
<feature type="binding site" evidence="1">
    <location>
        <begin position="30"/>
        <end position="33"/>
    </location>
    <ligand>
        <name>ATP</name>
        <dbReference type="ChEBI" id="CHEBI:30616"/>
    </ligand>
</feature>
<feature type="binding site" evidence="1">
    <location>
        <position position="51"/>
    </location>
    <ligand>
        <name>ATP</name>
        <dbReference type="ChEBI" id="CHEBI:30616"/>
    </ligand>
</feature>
<feature type="binding site" evidence="1">
    <location>
        <begin position="87"/>
        <end position="91"/>
    </location>
    <ligand>
        <name>ATP</name>
        <dbReference type="ChEBI" id="CHEBI:30616"/>
    </ligand>
</feature>
<feature type="binding site" evidence="1">
    <location>
        <position position="415"/>
    </location>
    <ligand>
        <name>ATP</name>
        <dbReference type="ChEBI" id="CHEBI:30616"/>
    </ligand>
</feature>
<feature type="binding site" evidence="1">
    <location>
        <begin position="479"/>
        <end position="481"/>
    </location>
    <ligand>
        <name>ATP</name>
        <dbReference type="ChEBI" id="CHEBI:30616"/>
    </ligand>
</feature>
<feature type="binding site" evidence="1">
    <location>
        <position position="495"/>
    </location>
    <ligand>
        <name>ATP</name>
        <dbReference type="ChEBI" id="CHEBI:30616"/>
    </ligand>
</feature>
<protein>
    <recommendedName>
        <fullName evidence="1">Chaperonin GroEL</fullName>
        <ecNumber evidence="1">5.6.1.7</ecNumber>
    </recommendedName>
    <alternativeName>
        <fullName evidence="1">60 kDa chaperonin</fullName>
    </alternativeName>
    <alternativeName>
        <fullName evidence="1">Chaperonin-60</fullName>
        <shortName evidence="1">Cpn60</shortName>
    </alternativeName>
</protein>
<accession>Q0BKF7</accession>
<evidence type="ECO:0000255" key="1">
    <source>
        <dbReference type="HAMAP-Rule" id="MF_00600"/>
    </source>
</evidence>
<name>CH60_FRATO</name>